<keyword id="KW-0067">ATP-binding</keyword>
<keyword id="KW-0963">Cytoplasm</keyword>
<keyword id="KW-0227">DNA damage</keyword>
<keyword id="KW-0233">DNA recombination</keyword>
<keyword id="KW-0234">DNA repair</keyword>
<keyword id="KW-0238">DNA-binding</keyword>
<keyword id="KW-0378">Hydrolase</keyword>
<keyword id="KW-0547">Nucleotide-binding</keyword>
<protein>
    <recommendedName>
        <fullName evidence="1">Holliday junction branch migration complex subunit RuvB</fullName>
        <ecNumber evidence="1">3.6.4.-</ecNumber>
    </recommendedName>
</protein>
<organism>
    <name type="scientific">Francisella tularensis subsp. holarctica (strain OSU18)</name>
    <dbReference type="NCBI Taxonomy" id="393011"/>
    <lineage>
        <taxon>Bacteria</taxon>
        <taxon>Pseudomonadati</taxon>
        <taxon>Pseudomonadota</taxon>
        <taxon>Gammaproteobacteria</taxon>
        <taxon>Thiotrichales</taxon>
        <taxon>Francisellaceae</taxon>
        <taxon>Francisella</taxon>
    </lineage>
</organism>
<gene>
    <name evidence="1" type="primary">ruvB</name>
    <name type="ordered locus">FTH_1052</name>
</gene>
<name>RUVB_FRATO</name>
<dbReference type="EC" id="3.6.4.-" evidence="1"/>
<dbReference type="EMBL" id="CP000437">
    <property type="protein sequence ID" value="ABI82940.1"/>
    <property type="molecule type" value="Genomic_DNA"/>
</dbReference>
<dbReference type="RefSeq" id="WP_003016007.1">
    <property type="nucleotide sequence ID" value="NC_017463.1"/>
</dbReference>
<dbReference type="SMR" id="Q0BLU4"/>
<dbReference type="KEGG" id="fth:FTH_1052"/>
<dbReference type="GO" id="GO:0005737">
    <property type="term" value="C:cytoplasm"/>
    <property type="evidence" value="ECO:0007669"/>
    <property type="project" value="UniProtKB-SubCell"/>
</dbReference>
<dbReference type="GO" id="GO:0048476">
    <property type="term" value="C:Holliday junction resolvase complex"/>
    <property type="evidence" value="ECO:0007669"/>
    <property type="project" value="UniProtKB-UniRule"/>
</dbReference>
<dbReference type="GO" id="GO:0005524">
    <property type="term" value="F:ATP binding"/>
    <property type="evidence" value="ECO:0007669"/>
    <property type="project" value="UniProtKB-UniRule"/>
</dbReference>
<dbReference type="GO" id="GO:0016887">
    <property type="term" value="F:ATP hydrolysis activity"/>
    <property type="evidence" value="ECO:0007669"/>
    <property type="project" value="InterPro"/>
</dbReference>
<dbReference type="GO" id="GO:0000400">
    <property type="term" value="F:four-way junction DNA binding"/>
    <property type="evidence" value="ECO:0007669"/>
    <property type="project" value="UniProtKB-UniRule"/>
</dbReference>
<dbReference type="GO" id="GO:0009378">
    <property type="term" value="F:four-way junction helicase activity"/>
    <property type="evidence" value="ECO:0007669"/>
    <property type="project" value="InterPro"/>
</dbReference>
<dbReference type="GO" id="GO:0006310">
    <property type="term" value="P:DNA recombination"/>
    <property type="evidence" value="ECO:0007669"/>
    <property type="project" value="UniProtKB-UniRule"/>
</dbReference>
<dbReference type="GO" id="GO:0006281">
    <property type="term" value="P:DNA repair"/>
    <property type="evidence" value="ECO:0007669"/>
    <property type="project" value="UniProtKB-UniRule"/>
</dbReference>
<dbReference type="CDD" id="cd00009">
    <property type="entry name" value="AAA"/>
    <property type="match status" value="1"/>
</dbReference>
<dbReference type="FunFam" id="1.10.8.60:FF:000023">
    <property type="entry name" value="Holliday junction ATP-dependent DNA helicase RuvB"/>
    <property type="match status" value="1"/>
</dbReference>
<dbReference type="FunFam" id="3.40.50.300:FF:000073">
    <property type="entry name" value="Holliday junction ATP-dependent DNA helicase RuvB"/>
    <property type="match status" value="1"/>
</dbReference>
<dbReference type="Gene3D" id="1.10.8.60">
    <property type="match status" value="1"/>
</dbReference>
<dbReference type="Gene3D" id="3.40.50.300">
    <property type="entry name" value="P-loop containing nucleotide triphosphate hydrolases"/>
    <property type="match status" value="1"/>
</dbReference>
<dbReference type="Gene3D" id="1.10.10.10">
    <property type="entry name" value="Winged helix-like DNA-binding domain superfamily/Winged helix DNA-binding domain"/>
    <property type="match status" value="1"/>
</dbReference>
<dbReference type="HAMAP" id="MF_00016">
    <property type="entry name" value="DNA_HJ_migration_RuvB"/>
    <property type="match status" value="1"/>
</dbReference>
<dbReference type="InterPro" id="IPR003593">
    <property type="entry name" value="AAA+_ATPase"/>
</dbReference>
<dbReference type="InterPro" id="IPR041445">
    <property type="entry name" value="AAA_lid_4"/>
</dbReference>
<dbReference type="InterPro" id="IPR004605">
    <property type="entry name" value="DNA_helicase_Holl-junc_RuvB"/>
</dbReference>
<dbReference type="InterPro" id="IPR027417">
    <property type="entry name" value="P-loop_NTPase"/>
</dbReference>
<dbReference type="InterPro" id="IPR008824">
    <property type="entry name" value="RuvB-like_N"/>
</dbReference>
<dbReference type="InterPro" id="IPR008823">
    <property type="entry name" value="RuvB_C"/>
</dbReference>
<dbReference type="InterPro" id="IPR036388">
    <property type="entry name" value="WH-like_DNA-bd_sf"/>
</dbReference>
<dbReference type="InterPro" id="IPR036390">
    <property type="entry name" value="WH_DNA-bd_sf"/>
</dbReference>
<dbReference type="NCBIfam" id="NF000868">
    <property type="entry name" value="PRK00080.1"/>
    <property type="match status" value="1"/>
</dbReference>
<dbReference type="NCBIfam" id="TIGR00635">
    <property type="entry name" value="ruvB"/>
    <property type="match status" value="1"/>
</dbReference>
<dbReference type="PANTHER" id="PTHR42848">
    <property type="match status" value="1"/>
</dbReference>
<dbReference type="PANTHER" id="PTHR42848:SF1">
    <property type="entry name" value="HOLLIDAY JUNCTION BRANCH MIGRATION COMPLEX SUBUNIT RUVB"/>
    <property type="match status" value="1"/>
</dbReference>
<dbReference type="Pfam" id="PF17864">
    <property type="entry name" value="AAA_lid_4"/>
    <property type="match status" value="1"/>
</dbReference>
<dbReference type="Pfam" id="PF05491">
    <property type="entry name" value="RuvB_C"/>
    <property type="match status" value="1"/>
</dbReference>
<dbReference type="Pfam" id="PF05496">
    <property type="entry name" value="RuvB_N"/>
    <property type="match status" value="1"/>
</dbReference>
<dbReference type="SMART" id="SM00382">
    <property type="entry name" value="AAA"/>
    <property type="match status" value="1"/>
</dbReference>
<dbReference type="SUPFAM" id="SSF52540">
    <property type="entry name" value="P-loop containing nucleoside triphosphate hydrolases"/>
    <property type="match status" value="1"/>
</dbReference>
<dbReference type="SUPFAM" id="SSF46785">
    <property type="entry name" value="Winged helix' DNA-binding domain"/>
    <property type="match status" value="1"/>
</dbReference>
<accession>Q0BLU4</accession>
<comment type="function">
    <text evidence="1">The RuvA-RuvB-RuvC complex processes Holliday junction (HJ) DNA during genetic recombination and DNA repair, while the RuvA-RuvB complex plays an important role in the rescue of blocked DNA replication forks via replication fork reversal (RFR). RuvA specifically binds to HJ cruciform DNA, conferring on it an open structure. The RuvB hexamer acts as an ATP-dependent pump, pulling dsDNA into and through the RuvAB complex. RuvB forms 2 homohexamers on either side of HJ DNA bound by 1 or 2 RuvA tetramers; 4 subunits per hexamer contact DNA at a time. Coordinated motions by a converter formed by DNA-disengaged RuvB subunits stimulates ATP hydrolysis and nucleotide exchange. Immobilization of the converter enables RuvB to convert the ATP-contained energy into a lever motion, pulling 2 nucleotides of DNA out of the RuvA tetramer per ATP hydrolyzed, thus driving DNA branch migration. The RuvB motors rotate together with the DNA substrate, which together with the progressing nucleotide cycle form the mechanistic basis for DNA recombination by continuous HJ branch migration. Branch migration allows RuvC to scan DNA until it finds its consensus sequence, where it cleaves and resolves cruciform DNA.</text>
</comment>
<comment type="catalytic activity">
    <reaction evidence="1">
        <text>ATP + H2O = ADP + phosphate + H(+)</text>
        <dbReference type="Rhea" id="RHEA:13065"/>
        <dbReference type="ChEBI" id="CHEBI:15377"/>
        <dbReference type="ChEBI" id="CHEBI:15378"/>
        <dbReference type="ChEBI" id="CHEBI:30616"/>
        <dbReference type="ChEBI" id="CHEBI:43474"/>
        <dbReference type="ChEBI" id="CHEBI:456216"/>
    </reaction>
</comment>
<comment type="subunit">
    <text evidence="1">Homohexamer. Forms an RuvA(8)-RuvB(12)-Holliday junction (HJ) complex. HJ DNA is sandwiched between 2 RuvA tetramers; dsDNA enters through RuvA and exits via RuvB. An RuvB hexamer assembles on each DNA strand where it exits the tetramer. Each RuvB hexamer is contacted by two RuvA subunits (via domain III) on 2 adjacent RuvB subunits; this complex drives branch migration. In the full resolvosome a probable DNA-RuvA(4)-RuvB(12)-RuvC(2) complex forms which resolves the HJ.</text>
</comment>
<comment type="subcellular location">
    <subcellularLocation>
        <location evidence="1">Cytoplasm</location>
    </subcellularLocation>
</comment>
<comment type="domain">
    <text evidence="1">Has 3 domains, the large (RuvB-L) and small ATPase (RuvB-S) domains and the C-terminal head (RuvB-H) domain. The head domain binds DNA, while the ATPase domains jointly bind ATP, ADP or are empty depending on the state of the subunit in the translocation cycle. During a single DNA translocation step the structure of each domain remains the same, but their relative positions change.</text>
</comment>
<comment type="similarity">
    <text evidence="1">Belongs to the RuvB family.</text>
</comment>
<reference key="1">
    <citation type="journal article" date="2006" name="J. Bacteriol.">
        <title>Chromosome rearrangement and diversification of Francisella tularensis revealed by the type B (OSU18) genome sequence.</title>
        <authorList>
            <person name="Petrosino J.F."/>
            <person name="Xiang Q."/>
            <person name="Karpathy S.E."/>
            <person name="Jiang H."/>
            <person name="Yerrapragada S."/>
            <person name="Liu Y."/>
            <person name="Gioia J."/>
            <person name="Hemphill L."/>
            <person name="Gonzalez A."/>
            <person name="Raghavan T.M."/>
            <person name="Uzman A."/>
            <person name="Fox G.E."/>
            <person name="Highlander S."/>
            <person name="Reichard M."/>
            <person name="Morton R.J."/>
            <person name="Clinkenbeard K.D."/>
            <person name="Weinstock G.M."/>
        </authorList>
    </citation>
    <scope>NUCLEOTIDE SEQUENCE [LARGE SCALE GENOMIC DNA]</scope>
    <source>
        <strain>OSU18</strain>
    </source>
</reference>
<proteinExistence type="inferred from homology"/>
<evidence type="ECO:0000255" key="1">
    <source>
        <dbReference type="HAMAP-Rule" id="MF_00016"/>
    </source>
</evidence>
<sequence>MIETDRIISANTAQTNDENVIDRAIRPKTLAEYEGQPAVREQMEIFIQAAKARKDALDHTLIFGPPGLGKTTLSNIIANEMGVELKQTSGPVLEKAGDLAALLTNLEENDVLFIDEIHRLSPVVEEILYPAMEDYQLDIMIGEGPAARSIKIDLPPFTLVGATTRAGLLTSPLRDRFGIIQRLEFYSIDDLSKIVYRSAKLLNLDITTDGAMEIAKRSRGTPRIANRLLRRVRDYAQVKGSGVICFEIADKALSMLKVDPVGFDHMDHRYLLTLMEKFAGGPVGLDTMSAALSEEKGTIEDVIEPYLIQQGYIMRTARGRIATLLAYNHFKLKIPDNLSADQQQTLSI</sequence>
<feature type="chain" id="PRO_1000001410" description="Holliday junction branch migration complex subunit RuvB">
    <location>
        <begin position="1"/>
        <end position="348"/>
    </location>
</feature>
<feature type="region of interest" description="Large ATPase domain (RuvB-L)" evidence="1">
    <location>
        <begin position="4"/>
        <end position="186"/>
    </location>
</feature>
<feature type="region of interest" description="Small ATPAse domain (RuvB-S)" evidence="1">
    <location>
        <begin position="187"/>
        <end position="257"/>
    </location>
</feature>
<feature type="region of interest" description="Head domain (RuvB-H)" evidence="1">
    <location>
        <begin position="260"/>
        <end position="348"/>
    </location>
</feature>
<feature type="binding site" evidence="1">
    <location>
        <position position="25"/>
    </location>
    <ligand>
        <name>ATP</name>
        <dbReference type="ChEBI" id="CHEBI:30616"/>
    </ligand>
</feature>
<feature type="binding site" evidence="1">
    <location>
        <position position="26"/>
    </location>
    <ligand>
        <name>ATP</name>
        <dbReference type="ChEBI" id="CHEBI:30616"/>
    </ligand>
</feature>
<feature type="binding site" evidence="1">
    <location>
        <position position="67"/>
    </location>
    <ligand>
        <name>ATP</name>
        <dbReference type="ChEBI" id="CHEBI:30616"/>
    </ligand>
</feature>
<feature type="binding site" evidence="1">
    <location>
        <position position="70"/>
    </location>
    <ligand>
        <name>ATP</name>
        <dbReference type="ChEBI" id="CHEBI:30616"/>
    </ligand>
</feature>
<feature type="binding site" evidence="1">
    <location>
        <position position="71"/>
    </location>
    <ligand>
        <name>ATP</name>
        <dbReference type="ChEBI" id="CHEBI:30616"/>
    </ligand>
</feature>
<feature type="binding site" evidence="1">
    <location>
        <position position="71"/>
    </location>
    <ligand>
        <name>Mg(2+)</name>
        <dbReference type="ChEBI" id="CHEBI:18420"/>
    </ligand>
</feature>
<feature type="binding site" evidence="1">
    <location>
        <position position="72"/>
    </location>
    <ligand>
        <name>ATP</name>
        <dbReference type="ChEBI" id="CHEBI:30616"/>
    </ligand>
</feature>
<feature type="binding site" evidence="1">
    <location>
        <begin position="133"/>
        <end position="135"/>
    </location>
    <ligand>
        <name>ATP</name>
        <dbReference type="ChEBI" id="CHEBI:30616"/>
    </ligand>
</feature>
<feature type="binding site" evidence="1">
    <location>
        <position position="176"/>
    </location>
    <ligand>
        <name>ATP</name>
        <dbReference type="ChEBI" id="CHEBI:30616"/>
    </ligand>
</feature>
<feature type="binding site" evidence="1">
    <location>
        <position position="186"/>
    </location>
    <ligand>
        <name>ATP</name>
        <dbReference type="ChEBI" id="CHEBI:30616"/>
    </ligand>
</feature>
<feature type="binding site" evidence="1">
    <location>
        <position position="223"/>
    </location>
    <ligand>
        <name>ATP</name>
        <dbReference type="ChEBI" id="CHEBI:30616"/>
    </ligand>
</feature>
<feature type="binding site" evidence="1">
    <location>
        <position position="315"/>
    </location>
    <ligand>
        <name>DNA</name>
        <dbReference type="ChEBI" id="CHEBI:16991"/>
    </ligand>
</feature>
<feature type="binding site" evidence="1">
    <location>
        <position position="320"/>
    </location>
    <ligand>
        <name>DNA</name>
        <dbReference type="ChEBI" id="CHEBI:16991"/>
    </ligand>
</feature>